<keyword id="KW-0687">Ribonucleoprotein</keyword>
<keyword id="KW-0689">Ribosomal protein</keyword>
<name>RL34_THEPX</name>
<evidence type="ECO:0000255" key="1">
    <source>
        <dbReference type="HAMAP-Rule" id="MF_00391"/>
    </source>
</evidence>
<evidence type="ECO:0000256" key="2">
    <source>
        <dbReference type="SAM" id="MobiDB-lite"/>
    </source>
</evidence>
<evidence type="ECO:0000305" key="3"/>
<protein>
    <recommendedName>
        <fullName evidence="1">Large ribosomal subunit protein bL34</fullName>
    </recommendedName>
    <alternativeName>
        <fullName evidence="3">50S ribosomal protein L34</fullName>
    </alternativeName>
</protein>
<feature type="chain" id="PRO_1000196131" description="Large ribosomal subunit protein bL34">
    <location>
        <begin position="1"/>
        <end position="44"/>
    </location>
</feature>
<feature type="region of interest" description="Disordered" evidence="2">
    <location>
        <begin position="1"/>
        <end position="44"/>
    </location>
</feature>
<feature type="compositionally biased region" description="Basic residues" evidence="2">
    <location>
        <begin position="1"/>
        <end position="23"/>
    </location>
</feature>
<feature type="compositionally biased region" description="Basic residues" evidence="2">
    <location>
        <begin position="30"/>
        <end position="44"/>
    </location>
</feature>
<gene>
    <name evidence="1" type="primary">rpmH</name>
    <name type="ordered locus">Teth514_2414</name>
</gene>
<organism>
    <name type="scientific">Thermoanaerobacter sp. (strain X514)</name>
    <dbReference type="NCBI Taxonomy" id="399726"/>
    <lineage>
        <taxon>Bacteria</taxon>
        <taxon>Bacillati</taxon>
        <taxon>Bacillota</taxon>
        <taxon>Clostridia</taxon>
        <taxon>Thermoanaerobacterales</taxon>
        <taxon>Thermoanaerobacteraceae</taxon>
        <taxon>Thermoanaerobacter</taxon>
    </lineage>
</organism>
<comment type="similarity">
    <text evidence="1">Belongs to the bacterial ribosomal protein bL34 family.</text>
</comment>
<dbReference type="EMBL" id="CP000923">
    <property type="protein sequence ID" value="ABY93673.1"/>
    <property type="molecule type" value="Genomic_DNA"/>
</dbReference>
<dbReference type="RefSeq" id="WP_003867410.1">
    <property type="nucleotide sequence ID" value="NC_010320.1"/>
</dbReference>
<dbReference type="SMR" id="B0K5N9"/>
<dbReference type="KEGG" id="tex:Teth514_2414"/>
<dbReference type="HOGENOM" id="CLU_129938_2_0_9"/>
<dbReference type="Proteomes" id="UP000002155">
    <property type="component" value="Chromosome"/>
</dbReference>
<dbReference type="GO" id="GO:1990904">
    <property type="term" value="C:ribonucleoprotein complex"/>
    <property type="evidence" value="ECO:0007669"/>
    <property type="project" value="UniProtKB-KW"/>
</dbReference>
<dbReference type="GO" id="GO:0005840">
    <property type="term" value="C:ribosome"/>
    <property type="evidence" value="ECO:0007669"/>
    <property type="project" value="UniProtKB-KW"/>
</dbReference>
<dbReference type="GO" id="GO:0003735">
    <property type="term" value="F:structural constituent of ribosome"/>
    <property type="evidence" value="ECO:0007669"/>
    <property type="project" value="InterPro"/>
</dbReference>
<dbReference type="GO" id="GO:0006412">
    <property type="term" value="P:translation"/>
    <property type="evidence" value="ECO:0007669"/>
    <property type="project" value="UniProtKB-UniRule"/>
</dbReference>
<dbReference type="FunFam" id="1.10.287.3980:FF:000001">
    <property type="entry name" value="Mitochondrial ribosomal protein L34"/>
    <property type="match status" value="1"/>
</dbReference>
<dbReference type="Gene3D" id="1.10.287.3980">
    <property type="match status" value="1"/>
</dbReference>
<dbReference type="HAMAP" id="MF_00391">
    <property type="entry name" value="Ribosomal_bL34"/>
    <property type="match status" value="1"/>
</dbReference>
<dbReference type="InterPro" id="IPR000271">
    <property type="entry name" value="Ribosomal_bL34"/>
</dbReference>
<dbReference type="NCBIfam" id="TIGR01030">
    <property type="entry name" value="rpmH_bact"/>
    <property type="match status" value="1"/>
</dbReference>
<dbReference type="PANTHER" id="PTHR14503:SF4">
    <property type="entry name" value="LARGE RIBOSOMAL SUBUNIT PROTEIN BL34M"/>
    <property type="match status" value="1"/>
</dbReference>
<dbReference type="PANTHER" id="PTHR14503">
    <property type="entry name" value="MITOCHONDRIAL RIBOSOMAL PROTEIN 34 FAMILY MEMBER"/>
    <property type="match status" value="1"/>
</dbReference>
<dbReference type="Pfam" id="PF00468">
    <property type="entry name" value="Ribosomal_L34"/>
    <property type="match status" value="1"/>
</dbReference>
<reference key="1">
    <citation type="submission" date="2008-01" db="EMBL/GenBank/DDBJ databases">
        <title>Complete sequence of Thermoanaerobacter sp. X514.</title>
        <authorList>
            <consortium name="US DOE Joint Genome Institute"/>
            <person name="Copeland A."/>
            <person name="Lucas S."/>
            <person name="Lapidus A."/>
            <person name="Barry K."/>
            <person name="Glavina del Rio T."/>
            <person name="Dalin E."/>
            <person name="Tice H."/>
            <person name="Pitluck S."/>
            <person name="Bruce D."/>
            <person name="Goodwin L."/>
            <person name="Saunders E."/>
            <person name="Brettin T."/>
            <person name="Detter J.C."/>
            <person name="Han C."/>
            <person name="Schmutz J."/>
            <person name="Larimer F."/>
            <person name="Land M."/>
            <person name="Hauser L."/>
            <person name="Kyrpides N."/>
            <person name="Kim E."/>
            <person name="Hemme C."/>
            <person name="Fields M.W."/>
            <person name="He Z."/>
            <person name="Zhou J."/>
            <person name="Richardson P."/>
        </authorList>
    </citation>
    <scope>NUCLEOTIDE SEQUENCE [LARGE SCALE GENOMIC DNA]</scope>
    <source>
        <strain>X514</strain>
    </source>
</reference>
<sequence>MLRTYQPKKRHRKKVHGFRKRMSTKSGRNVLKRRRQKGRHRLTA</sequence>
<accession>B0K5N9</accession>
<proteinExistence type="inferred from homology"/>